<name>IF3_NEIMA</name>
<proteinExistence type="inferred from homology"/>
<sequence length="173" mass="19779">MIAQEREARINGEITAKEVRLISESGEQLGVVSVREALAMAEGQDVDLVEISPTAKPPVCKLMDYGKYKYQQAKKRDEAKKNQKQVQIKEIKFRPGTDEGDYQIKMRNINRFLADGDKVKVTLRFRGREMAHQQLGAQLLERVKEDLAEVAQIESFPKMEGRQMVMMIAPKKK</sequence>
<accession>P65137</accession>
<accession>A1IQX3</accession>
<accession>Q9JVA2</accession>
<accession>Q9K094</accession>
<comment type="function">
    <text evidence="1">IF-3 binds to the 30S ribosomal subunit and shifts the equilibrium between 70S ribosomes and their 50S and 30S subunits in favor of the free subunits, thus enhancing the availability of 30S subunits on which protein synthesis initiation begins.</text>
</comment>
<comment type="subunit">
    <text evidence="1">Monomer.</text>
</comment>
<comment type="subcellular location">
    <subcellularLocation>
        <location evidence="1">Cytoplasm</location>
    </subcellularLocation>
</comment>
<comment type="similarity">
    <text evidence="1">Belongs to the IF-3 family.</text>
</comment>
<feature type="chain" id="PRO_0000177548" description="Translation initiation factor IF-3">
    <location>
        <begin position="1"/>
        <end position="173"/>
    </location>
</feature>
<reference key="1">
    <citation type="journal article" date="2000" name="Nature">
        <title>Complete DNA sequence of a serogroup A strain of Neisseria meningitidis Z2491.</title>
        <authorList>
            <person name="Parkhill J."/>
            <person name="Achtman M."/>
            <person name="James K.D."/>
            <person name="Bentley S.D."/>
            <person name="Churcher C.M."/>
            <person name="Klee S.R."/>
            <person name="Morelli G."/>
            <person name="Basham D."/>
            <person name="Brown D."/>
            <person name="Chillingworth T."/>
            <person name="Davies R.M."/>
            <person name="Davis P."/>
            <person name="Devlin K."/>
            <person name="Feltwell T."/>
            <person name="Hamlin N."/>
            <person name="Holroyd S."/>
            <person name="Jagels K."/>
            <person name="Leather S."/>
            <person name="Moule S."/>
            <person name="Mungall K.L."/>
            <person name="Quail M.A."/>
            <person name="Rajandream M.A."/>
            <person name="Rutherford K.M."/>
            <person name="Simmonds M."/>
            <person name="Skelton J."/>
            <person name="Whitehead S."/>
            <person name="Spratt B.G."/>
            <person name="Barrell B.G."/>
        </authorList>
    </citation>
    <scope>NUCLEOTIDE SEQUENCE [LARGE SCALE GENOMIC DNA]</scope>
    <source>
        <strain>DSM 15465 / Z2491</strain>
    </source>
</reference>
<gene>
    <name evidence="1" type="primary">infC</name>
    <name type="ordered locus">NMA0930</name>
</gene>
<evidence type="ECO:0000255" key="1">
    <source>
        <dbReference type="HAMAP-Rule" id="MF_00080"/>
    </source>
</evidence>
<organism>
    <name type="scientific">Neisseria meningitidis serogroup A / serotype 4A (strain DSM 15465 / Z2491)</name>
    <dbReference type="NCBI Taxonomy" id="122587"/>
    <lineage>
        <taxon>Bacteria</taxon>
        <taxon>Pseudomonadati</taxon>
        <taxon>Pseudomonadota</taxon>
        <taxon>Betaproteobacteria</taxon>
        <taxon>Neisseriales</taxon>
        <taxon>Neisseriaceae</taxon>
        <taxon>Neisseria</taxon>
    </lineage>
</organism>
<keyword id="KW-0963">Cytoplasm</keyword>
<keyword id="KW-0396">Initiation factor</keyword>
<keyword id="KW-0648">Protein biosynthesis</keyword>
<dbReference type="EMBL" id="AL157959">
    <property type="protein sequence ID" value="CAM08157.1"/>
    <property type="molecule type" value="Genomic_DNA"/>
</dbReference>
<dbReference type="PIR" id="C81939">
    <property type="entry name" value="C81939"/>
</dbReference>
<dbReference type="RefSeq" id="WP_010951024.1">
    <property type="nucleotide sequence ID" value="NC_003116.1"/>
</dbReference>
<dbReference type="SMR" id="P65137"/>
<dbReference type="EnsemblBacteria" id="CAM08157">
    <property type="protein sequence ID" value="CAM08157"/>
    <property type="gene ID" value="NMA0930"/>
</dbReference>
<dbReference type="GeneID" id="93386453"/>
<dbReference type="KEGG" id="nma:NMA0930"/>
<dbReference type="HOGENOM" id="CLU_054919_3_2_4"/>
<dbReference type="Proteomes" id="UP000000626">
    <property type="component" value="Chromosome"/>
</dbReference>
<dbReference type="GO" id="GO:0005829">
    <property type="term" value="C:cytosol"/>
    <property type="evidence" value="ECO:0007669"/>
    <property type="project" value="TreeGrafter"/>
</dbReference>
<dbReference type="GO" id="GO:0016020">
    <property type="term" value="C:membrane"/>
    <property type="evidence" value="ECO:0007669"/>
    <property type="project" value="TreeGrafter"/>
</dbReference>
<dbReference type="GO" id="GO:0043022">
    <property type="term" value="F:ribosome binding"/>
    <property type="evidence" value="ECO:0007669"/>
    <property type="project" value="TreeGrafter"/>
</dbReference>
<dbReference type="GO" id="GO:0003743">
    <property type="term" value="F:translation initiation factor activity"/>
    <property type="evidence" value="ECO:0007669"/>
    <property type="project" value="UniProtKB-UniRule"/>
</dbReference>
<dbReference type="GO" id="GO:0032790">
    <property type="term" value="P:ribosome disassembly"/>
    <property type="evidence" value="ECO:0007669"/>
    <property type="project" value="TreeGrafter"/>
</dbReference>
<dbReference type="FunFam" id="3.10.20.80:FF:000001">
    <property type="entry name" value="Translation initiation factor IF-3"/>
    <property type="match status" value="1"/>
</dbReference>
<dbReference type="FunFam" id="3.30.110.10:FF:000001">
    <property type="entry name" value="Translation initiation factor IF-3"/>
    <property type="match status" value="1"/>
</dbReference>
<dbReference type="Gene3D" id="3.30.110.10">
    <property type="entry name" value="Translation initiation factor 3 (IF-3), C-terminal domain"/>
    <property type="match status" value="1"/>
</dbReference>
<dbReference type="Gene3D" id="3.10.20.80">
    <property type="entry name" value="Translation initiation factor 3 (IF-3), N-terminal domain"/>
    <property type="match status" value="1"/>
</dbReference>
<dbReference type="HAMAP" id="MF_00080">
    <property type="entry name" value="IF_3"/>
    <property type="match status" value="1"/>
</dbReference>
<dbReference type="InterPro" id="IPR036788">
    <property type="entry name" value="T_IF-3_C_sf"/>
</dbReference>
<dbReference type="InterPro" id="IPR036787">
    <property type="entry name" value="T_IF-3_N_sf"/>
</dbReference>
<dbReference type="InterPro" id="IPR019813">
    <property type="entry name" value="Translation_initiation_fac3_CS"/>
</dbReference>
<dbReference type="InterPro" id="IPR001288">
    <property type="entry name" value="Translation_initiation_fac_3"/>
</dbReference>
<dbReference type="InterPro" id="IPR019815">
    <property type="entry name" value="Translation_initiation_fac_3_C"/>
</dbReference>
<dbReference type="InterPro" id="IPR019814">
    <property type="entry name" value="Translation_initiation_fac_3_N"/>
</dbReference>
<dbReference type="NCBIfam" id="TIGR00168">
    <property type="entry name" value="infC"/>
    <property type="match status" value="1"/>
</dbReference>
<dbReference type="PANTHER" id="PTHR10938">
    <property type="entry name" value="TRANSLATION INITIATION FACTOR IF-3"/>
    <property type="match status" value="1"/>
</dbReference>
<dbReference type="PANTHER" id="PTHR10938:SF0">
    <property type="entry name" value="TRANSLATION INITIATION FACTOR IF-3, MITOCHONDRIAL"/>
    <property type="match status" value="1"/>
</dbReference>
<dbReference type="Pfam" id="PF00707">
    <property type="entry name" value="IF3_C"/>
    <property type="match status" value="1"/>
</dbReference>
<dbReference type="Pfam" id="PF05198">
    <property type="entry name" value="IF3_N"/>
    <property type="match status" value="1"/>
</dbReference>
<dbReference type="SUPFAM" id="SSF55200">
    <property type="entry name" value="Translation initiation factor IF3, C-terminal domain"/>
    <property type="match status" value="1"/>
</dbReference>
<dbReference type="SUPFAM" id="SSF54364">
    <property type="entry name" value="Translation initiation factor IF3, N-terminal domain"/>
    <property type="match status" value="1"/>
</dbReference>
<dbReference type="PROSITE" id="PS00938">
    <property type="entry name" value="IF3"/>
    <property type="match status" value="1"/>
</dbReference>
<protein>
    <recommendedName>
        <fullName evidence="1">Translation initiation factor IF-3</fullName>
    </recommendedName>
</protein>